<reference evidence="8" key="1">
    <citation type="journal article" date="2014" name="BMC Biol.">
        <title>A comprehensive evaluation of rodent malaria parasite genomes and gene expression.</title>
        <authorList>
            <person name="Otto T.D."/>
            <person name="Bohme U."/>
            <person name="Jackson A.P."/>
            <person name="Hunt M."/>
            <person name="Franke-Fayard B."/>
            <person name="Hoeijmakers W.A."/>
            <person name="Religa A.A."/>
            <person name="Robertson L."/>
            <person name="Sanders M."/>
            <person name="Ogun S.A."/>
            <person name="Cunningham D."/>
            <person name="Erhart A."/>
            <person name="Billker O."/>
            <person name="Khan S.M."/>
            <person name="Stunnenberg H.G."/>
            <person name="Langhorne J."/>
            <person name="Holder A.A."/>
            <person name="Waters A.P."/>
            <person name="Newbold C.I."/>
            <person name="Pain A."/>
            <person name="Berriman M."/>
            <person name="Janse C.J."/>
        </authorList>
    </citation>
    <scope>NUCLEOTIDE SEQUENCE [LARGE SCALE GENOMIC DNA]</scope>
    <source>
        <strain evidence="8">ANKA</strain>
    </source>
</reference>
<reference evidence="6" key="2">
    <citation type="journal article" date="2016" name="Nat. Commun.">
        <title>Functional profiles of orphan membrane transporters in the life cycle of the malaria parasite.</title>
        <authorList>
            <person name="Kenthirapalan S."/>
            <person name="Waters A.P."/>
            <person name="Matuschewski K."/>
            <person name="Kooij T.W."/>
        </authorList>
    </citation>
    <scope>FUNCTION</scope>
    <scope>DISRUPTION PHENOTYPE</scope>
</reference>
<dbReference type="EMBL" id="LK023124">
    <property type="protein sequence ID" value="VUC55819.1"/>
    <property type="molecule type" value="Genomic_DNA"/>
</dbReference>
<dbReference type="SMR" id="A0A509AK04"/>
<dbReference type="FunCoup" id="A0A509AK04">
    <property type="interactions" value="694"/>
</dbReference>
<dbReference type="VEuPathDB" id="PlasmoDB:PBANKA_0927900"/>
<dbReference type="InParanoid" id="A0A509AK04"/>
<dbReference type="OMA" id="LVRKNMI"/>
<dbReference type="Proteomes" id="UP000074855">
    <property type="component" value="Chromosome 9"/>
</dbReference>
<dbReference type="GO" id="GO:0005743">
    <property type="term" value="C:mitochondrial inner membrane"/>
    <property type="evidence" value="ECO:0007669"/>
    <property type="project" value="UniProtKB-SubCell"/>
</dbReference>
<dbReference type="GO" id="GO:0015095">
    <property type="term" value="F:magnesium ion transmembrane transporter activity"/>
    <property type="evidence" value="ECO:0007669"/>
    <property type="project" value="TreeGrafter"/>
</dbReference>
<dbReference type="CDD" id="cd12823">
    <property type="entry name" value="Mrs2_Mfm1p-like"/>
    <property type="match status" value="1"/>
</dbReference>
<dbReference type="Gene3D" id="2.40.128.330">
    <property type="match status" value="1"/>
</dbReference>
<dbReference type="Gene3D" id="1.20.58.340">
    <property type="entry name" value="Magnesium transport protein CorA, transmembrane region"/>
    <property type="match status" value="2"/>
</dbReference>
<dbReference type="InterPro" id="IPR045863">
    <property type="entry name" value="CorA_TM1_TM2"/>
</dbReference>
<dbReference type="InterPro" id="IPR039204">
    <property type="entry name" value="MRS2-like"/>
</dbReference>
<dbReference type="PANTHER" id="PTHR13890:SF0">
    <property type="entry name" value="MAGNESIUM TRANSPORTER MRS2 HOMOLOG, MITOCHONDRIAL"/>
    <property type="match status" value="1"/>
</dbReference>
<dbReference type="PANTHER" id="PTHR13890">
    <property type="entry name" value="RNA SPLICING PROTEIN MRS2, MITOCHONDRIAL"/>
    <property type="match status" value="1"/>
</dbReference>
<dbReference type="Pfam" id="PF22099">
    <property type="entry name" value="MRS2-like"/>
    <property type="match status" value="2"/>
</dbReference>
<dbReference type="SUPFAM" id="SSF144083">
    <property type="entry name" value="Magnesium transport protein CorA, transmembrane region"/>
    <property type="match status" value="1"/>
</dbReference>
<keyword id="KW-0175">Coiled coil</keyword>
<keyword id="KW-0406">Ion transport</keyword>
<keyword id="KW-0460">Magnesium</keyword>
<keyword id="KW-0472">Membrane</keyword>
<keyword id="KW-0496">Mitochondrion</keyword>
<keyword id="KW-0999">Mitochondrion inner membrane</keyword>
<keyword id="KW-1185">Reference proteome</keyword>
<keyword id="KW-0809">Transit peptide</keyword>
<keyword id="KW-0812">Transmembrane</keyword>
<keyword id="KW-1133">Transmembrane helix</keyword>
<keyword id="KW-0813">Transport</keyword>
<organism evidence="8">
    <name type="scientific">Plasmodium berghei (strain Anka)</name>
    <dbReference type="NCBI Taxonomy" id="5823"/>
    <lineage>
        <taxon>Eukaryota</taxon>
        <taxon>Sar</taxon>
        <taxon>Alveolata</taxon>
        <taxon>Apicomplexa</taxon>
        <taxon>Aconoidasida</taxon>
        <taxon>Haemosporida</taxon>
        <taxon>Plasmodiidae</taxon>
        <taxon>Plasmodium</taxon>
        <taxon>Plasmodium (Vinckeia)</taxon>
    </lineage>
</organism>
<feature type="transit peptide" description="Mitochondrion" evidence="2">
    <location>
        <begin position="1"/>
        <end status="unknown"/>
    </location>
</feature>
<feature type="chain" id="PRO_0000455041" description="Mitochondrial inner membrane magnesium transporter MIT1" evidence="2">
    <location>
        <begin status="unknown"/>
        <end position="433"/>
    </location>
</feature>
<feature type="topological domain" description="Mitochondrial matrix" evidence="6">
    <location>
        <begin status="unknown"/>
        <end position="359"/>
    </location>
</feature>
<feature type="transmembrane region" description="Helical" evidence="2">
    <location>
        <begin position="360"/>
        <end position="380"/>
    </location>
</feature>
<feature type="topological domain" description="Extracellular" evidence="6">
    <location>
        <begin position="381"/>
        <end position="396"/>
    </location>
</feature>
<feature type="transmembrane region" description="Helical" evidence="2">
    <location>
        <begin position="397"/>
        <end position="417"/>
    </location>
</feature>
<feature type="topological domain" description="Mitochondrial matrix" evidence="6">
    <location>
        <begin position="418"/>
        <end position="433"/>
    </location>
</feature>
<feature type="coiled-coil region" evidence="2">
    <location>
        <begin position="257"/>
        <end position="298"/>
    </location>
</feature>
<evidence type="ECO:0000250" key="1">
    <source>
        <dbReference type="UniProtKB" id="Q01926"/>
    </source>
</evidence>
<evidence type="ECO:0000255" key="2"/>
<evidence type="ECO:0000255" key="3">
    <source>
        <dbReference type="RuleBase" id="RU366042"/>
    </source>
</evidence>
<evidence type="ECO:0000269" key="4">
    <source>
    </source>
</evidence>
<evidence type="ECO:0000303" key="5">
    <source>
    </source>
</evidence>
<evidence type="ECO:0000305" key="6"/>
<evidence type="ECO:0000312" key="7">
    <source>
        <dbReference type="EMBL" id="VUC55819.1"/>
    </source>
</evidence>
<evidence type="ECO:0000312" key="8">
    <source>
        <dbReference type="Proteomes" id="UP000074855"/>
    </source>
</evidence>
<sequence>MFRWLNINKCMSKIIHPYVLKPNNCIHTNWLFKFATLKNENKIFPKKNLNNNILMQNIKVADDGNAICEQLLFSKYDLPYLLKIPVSDLRLIDTGNNNHNPTILIRKDVILLRTGFISCIIRYNETWLFEGSNSVVINAKDLISKNLKKQNNNKFKNCNNDEIVESLCRKRNCTDNGKENMKQINNDEKEELNYLNIINNFYRYNKGKAYFEFLCLDICMQLSIKEYENDLEGINYKIRDIILLQRKEENNELNMLTNKLLRDMMKIKNNLQKLSNLLNALRTNIEKILNNENDMKNMYLTYLNKNPYNNLKDCSDLEILLETHLQLTDELYGQLENVEEKITHYEELMRLNLDYNRNKFILLNAKISFSTLLFSISSVVTSLFGMNLKNFVEDSNYAFIIVSIFVSVWSIIGIYVTKNINTLLKFFDRYNFR</sequence>
<accession>A0A509AK04</accession>
<comment type="function">
    <text evidence="1 4">Mitochondrial inner membrane magnesium transporter required for mitochondrial magnesium homeostasis (By similarity). Involved in the development of the sporozoite in the mosquito vector midgut (PubMed:26796412).</text>
</comment>
<comment type="subcellular location">
    <subcellularLocation>
        <location evidence="3">Mitochondrion inner membrane</location>
        <topology evidence="3">Multi-pass membrane protein</topology>
    </subcellularLocation>
</comment>
<comment type="disruption phenotype">
    <text evidence="4">Severe decrease in the number of sporozoites in the mosquito salivary gland (PubMed:26796412). Normal asexual stage in mouse erythrocytes and normal exflagellation of male gametocytes (PubMed:26796412).</text>
</comment>
<comment type="similarity">
    <text evidence="3">Belongs to the CorA metal ion transporter (MIT) (TC 1.A.35) family.</text>
</comment>
<name>MRS2_PLABA</name>
<gene>
    <name evidence="5" type="primary">MIT1</name>
    <name evidence="7" type="ORF">PBANKA_0927900</name>
</gene>
<protein>
    <recommendedName>
        <fullName evidence="6">Mitochondrial inner membrane magnesium transporter MIT1</fullName>
    </recommendedName>
    <alternativeName>
        <fullName evidence="5">PfMIT1</fullName>
    </alternativeName>
</protein>
<proteinExistence type="inferred from homology"/>